<gene>
    <name evidence="7" type="primary">slc-25a10</name>
    <name evidence="7" type="ORF">K11G12.5</name>
</gene>
<evidence type="ECO:0000250" key="1">
    <source>
        <dbReference type="UniProtKB" id="Q9QZD8"/>
    </source>
</evidence>
<evidence type="ECO:0000255" key="2"/>
<evidence type="ECO:0000255" key="3">
    <source>
        <dbReference type="PROSITE-ProRule" id="PRU00282"/>
    </source>
</evidence>
<evidence type="ECO:0000269" key="4">
    <source>
    </source>
</evidence>
<evidence type="ECO:0000305" key="5"/>
<evidence type="ECO:0000312" key="6">
    <source>
        <dbReference type="Proteomes" id="UP000001940"/>
    </source>
</evidence>
<evidence type="ECO:0000312" key="7">
    <source>
        <dbReference type="WormBase" id="K11G12.5"/>
    </source>
</evidence>
<proteinExistence type="evidence at transcript level"/>
<reference key="1">
    <citation type="journal article" date="1994" name="DNA Seq.">
        <title>Extension of the mitochondrial transporter super-family: sequences of five members from the nematode worm, Caenorhabditis elegans.</title>
        <authorList>
            <person name="Runswick M.J."/>
            <person name="Philippides A."/>
            <person name="Lauria G."/>
            <person name="Walker J.E."/>
        </authorList>
    </citation>
    <scope>NUCLEOTIDE SEQUENCE [MRNA]</scope>
</reference>
<reference key="2">
    <citation type="journal article" date="1998" name="Science">
        <title>Genome sequence of the nematode C. elegans: a platform for investigating biology.</title>
        <authorList>
            <consortium name="The C. elegans sequencing consortium"/>
        </authorList>
    </citation>
    <scope>NUCLEOTIDE SEQUENCE [LARGE SCALE GENOMIC DNA]</scope>
    <source>
        <strain evidence="6">Bristol N2</strain>
    </source>
</reference>
<reference key="3">
    <citation type="journal article" date="1998" name="J. Biol. Chem.">
        <title>The sequence, bacterial expression, and functional reconstitution of the rat mitochondrial dicarboxylate transporter cloned via distant homologs in yeast and Caenorhabditis elegans.</title>
        <authorList>
            <person name="Fiermonte G."/>
            <person name="Palmieri L."/>
            <person name="Dolce V."/>
            <person name="Lasorsa F.M."/>
            <person name="Palmieri F."/>
            <person name="Runswick M.J."/>
            <person name="Walker J.E."/>
        </authorList>
    </citation>
    <scope>FUNCTION</scope>
    <scope>TRANSPORT ACTIVITY</scope>
</reference>
<sequence length="290" mass="32022">MAEDKTKRLGRWYFGGVAGAMAACCTHPLDLLKVQLQTQQQGKLTIGQLSLKIYKNDGILAFYNGVSASVLRQLTYSTTRFGIYETVKKQLPQDQPLPFYQKALLAGFAGACGGMVGTPGDLVNVRMQNDSKLPLEQRRNYKHALDGLVRITREEGFMKMFNGATMATSRAILMTIGQLSFYDQIKQTLISSGVAEDNLQTHFASSISAASVATVMTQPLDVMKTRMMNAAPGEFKGILDCFMFTAKLGPMGFFKGFIPAWARLAPHTVLTFIFFEQLRLKFGYAPPVKA</sequence>
<keyword id="KW-0007">Acetylation</keyword>
<keyword id="KW-0050">Antiport</keyword>
<keyword id="KW-0445">Lipid transport</keyword>
<keyword id="KW-0472">Membrane</keyword>
<keyword id="KW-0496">Mitochondrion</keyword>
<keyword id="KW-0999">Mitochondrion inner membrane</keyword>
<keyword id="KW-1185">Reference proteome</keyword>
<keyword id="KW-0677">Repeat</keyword>
<keyword id="KW-0812">Transmembrane</keyword>
<keyword id="KW-1133">Transmembrane helix</keyword>
<keyword id="KW-0813">Transport</keyword>
<dbReference type="EMBL" id="X76114">
    <property type="protein sequence ID" value="CAA53720.1"/>
    <property type="molecule type" value="mRNA"/>
</dbReference>
<dbReference type="EMBL" id="BX284606">
    <property type="protein sequence ID" value="CCD70797.1"/>
    <property type="molecule type" value="Genomic_DNA"/>
</dbReference>
<dbReference type="PIR" id="S44091">
    <property type="entry name" value="S44091"/>
</dbReference>
<dbReference type="RefSeq" id="NP_509133.1">
    <property type="nucleotide sequence ID" value="NM_076732.5"/>
</dbReference>
<dbReference type="SMR" id="G5EE96"/>
<dbReference type="FunCoup" id="G5EE96">
    <property type="interactions" value="803"/>
</dbReference>
<dbReference type="STRING" id="6239.K11G12.5.2"/>
<dbReference type="PaxDb" id="6239-K11G12.5"/>
<dbReference type="PeptideAtlas" id="G5EE96"/>
<dbReference type="EnsemblMetazoa" id="K11G12.5.1">
    <property type="protein sequence ID" value="K11G12.5.1"/>
    <property type="gene ID" value="WBGene00019656"/>
</dbReference>
<dbReference type="GeneID" id="180940"/>
<dbReference type="KEGG" id="cel:CELE_K11G12.5"/>
<dbReference type="AGR" id="WB:WBGene00019656"/>
<dbReference type="CTD" id="180940"/>
<dbReference type="WormBase" id="K11G12.5">
    <property type="protein sequence ID" value="CE02827"/>
    <property type="gene ID" value="WBGene00019656"/>
    <property type="gene designation" value="slc-25A10"/>
</dbReference>
<dbReference type="eggNOG" id="KOG0759">
    <property type="taxonomic scope" value="Eukaryota"/>
</dbReference>
<dbReference type="GeneTree" id="ENSGT00940000156783"/>
<dbReference type="HOGENOM" id="CLU_015166_14_1_1"/>
<dbReference type="InParanoid" id="G5EE96"/>
<dbReference type="OMA" id="TTRFGAY"/>
<dbReference type="OrthoDB" id="448427at2759"/>
<dbReference type="Reactome" id="R-CEL-1614517">
    <property type="pathway name" value="Sulfide oxidation to sulfate"/>
</dbReference>
<dbReference type="Reactome" id="R-CEL-428643">
    <property type="pathway name" value="Organic anion transporters"/>
</dbReference>
<dbReference type="PRO" id="PR:G5EE96"/>
<dbReference type="Proteomes" id="UP000001940">
    <property type="component" value="Chromosome X"/>
</dbReference>
<dbReference type="Bgee" id="WBGene00019656">
    <property type="expression patterns" value="Expressed in larva and 4 other cell types or tissues"/>
</dbReference>
<dbReference type="GO" id="GO:0005743">
    <property type="term" value="C:mitochondrial inner membrane"/>
    <property type="evidence" value="ECO:0007669"/>
    <property type="project" value="UniProtKB-SubCell"/>
</dbReference>
<dbReference type="GO" id="GO:0015297">
    <property type="term" value="F:antiporter activity"/>
    <property type="evidence" value="ECO:0007669"/>
    <property type="project" value="UniProtKB-KW"/>
</dbReference>
<dbReference type="GO" id="GO:0015140">
    <property type="term" value="F:malate transmembrane transporter activity"/>
    <property type="evidence" value="ECO:0000318"/>
    <property type="project" value="GO_Central"/>
</dbReference>
<dbReference type="GO" id="GO:0015131">
    <property type="term" value="F:oxaloacetate transmembrane transporter activity"/>
    <property type="evidence" value="ECO:0000318"/>
    <property type="project" value="GO_Central"/>
</dbReference>
<dbReference type="GO" id="GO:0015141">
    <property type="term" value="F:succinate transmembrane transporter activity"/>
    <property type="evidence" value="ECO:0000318"/>
    <property type="project" value="GO_Central"/>
</dbReference>
<dbReference type="GO" id="GO:0015116">
    <property type="term" value="F:sulfate transmembrane transporter activity"/>
    <property type="evidence" value="ECO:0000318"/>
    <property type="project" value="GO_Central"/>
</dbReference>
<dbReference type="GO" id="GO:0015117">
    <property type="term" value="F:thiosulfate transmembrane transporter activity"/>
    <property type="evidence" value="ECO:0000318"/>
    <property type="project" value="GO_Central"/>
</dbReference>
<dbReference type="GO" id="GO:0006869">
    <property type="term" value="P:lipid transport"/>
    <property type="evidence" value="ECO:0007669"/>
    <property type="project" value="UniProtKB-KW"/>
</dbReference>
<dbReference type="GO" id="GO:0071423">
    <property type="term" value="P:malate transmembrane transport"/>
    <property type="evidence" value="ECO:0000318"/>
    <property type="project" value="GO_Central"/>
</dbReference>
<dbReference type="GO" id="GO:0015729">
    <property type="term" value="P:oxaloacetate transport"/>
    <property type="evidence" value="ECO:0000318"/>
    <property type="project" value="GO_Central"/>
</dbReference>
<dbReference type="GO" id="GO:0035435">
    <property type="term" value="P:phosphate ion transmembrane transport"/>
    <property type="evidence" value="ECO:0000318"/>
    <property type="project" value="GO_Central"/>
</dbReference>
<dbReference type="GO" id="GO:0071422">
    <property type="term" value="P:succinate transmembrane transport"/>
    <property type="evidence" value="ECO:0000318"/>
    <property type="project" value="GO_Central"/>
</dbReference>
<dbReference type="GO" id="GO:1902358">
    <property type="term" value="P:sulfate transmembrane transport"/>
    <property type="evidence" value="ECO:0000318"/>
    <property type="project" value="GO_Central"/>
</dbReference>
<dbReference type="GO" id="GO:0015709">
    <property type="term" value="P:thiosulfate transport"/>
    <property type="evidence" value="ECO:0000318"/>
    <property type="project" value="GO_Central"/>
</dbReference>
<dbReference type="FunFam" id="1.50.40.10:FF:000077">
    <property type="entry name" value="Mitochondrial dicarboxylate carrier"/>
    <property type="match status" value="1"/>
</dbReference>
<dbReference type="Gene3D" id="1.50.40.10">
    <property type="entry name" value="Mitochondrial carrier domain"/>
    <property type="match status" value="1"/>
</dbReference>
<dbReference type="InterPro" id="IPR002067">
    <property type="entry name" value="Mit_carrier"/>
</dbReference>
<dbReference type="InterPro" id="IPR050391">
    <property type="entry name" value="Mito_Metabolite_Transporter"/>
</dbReference>
<dbReference type="InterPro" id="IPR018108">
    <property type="entry name" value="Mitochondrial_sb/sol_carrier"/>
</dbReference>
<dbReference type="InterPro" id="IPR023395">
    <property type="entry name" value="Mt_carrier_dom_sf"/>
</dbReference>
<dbReference type="PANTHER" id="PTHR45618">
    <property type="entry name" value="MITOCHONDRIAL DICARBOXYLATE CARRIER-RELATED"/>
    <property type="match status" value="1"/>
</dbReference>
<dbReference type="Pfam" id="PF00153">
    <property type="entry name" value="Mito_carr"/>
    <property type="match status" value="3"/>
</dbReference>
<dbReference type="PRINTS" id="PR00926">
    <property type="entry name" value="MITOCARRIER"/>
</dbReference>
<dbReference type="SUPFAM" id="SSF103506">
    <property type="entry name" value="Mitochondrial carrier"/>
    <property type="match status" value="1"/>
</dbReference>
<dbReference type="PROSITE" id="PS50920">
    <property type="entry name" value="SOLCAR"/>
    <property type="match status" value="3"/>
</dbReference>
<comment type="function">
    <text evidence="1 4">Catalyzes the electroneutral exchange or flux of physiologically important metabolites such as dicarboxylates (malonate, malate, succinate), inorganic sulfur-containing anions, and phosphate, across mitochondrial inner membrane (PubMed:9733776). Plays an important role in gluconeogenesis, fatty acid metabolism, urea synthesis, and sulfur metabolism, by supplying the substrates for the different metabolic processes (By similarity).</text>
</comment>
<comment type="catalytic activity">
    <reaction evidence="4">
        <text>(S)-malate(in) + phosphate(out) = (S)-malate(out) + phosphate(in)</text>
        <dbReference type="Rhea" id="RHEA:71607"/>
        <dbReference type="ChEBI" id="CHEBI:15589"/>
        <dbReference type="ChEBI" id="CHEBI:43474"/>
    </reaction>
</comment>
<comment type="catalytic activity">
    <reaction evidence="4">
        <text>malonate(out) + (S)-malate(in) = malonate(in) + (S)-malate(out)</text>
        <dbReference type="Rhea" id="RHEA:71611"/>
        <dbReference type="ChEBI" id="CHEBI:15589"/>
        <dbReference type="ChEBI" id="CHEBI:15792"/>
    </reaction>
</comment>
<comment type="catalytic activity">
    <reaction evidence="4">
        <text>(S)-malate(in) + succinate(out) = (S)-malate(out) + succinate(in)</text>
        <dbReference type="Rhea" id="RHEA:29327"/>
        <dbReference type="ChEBI" id="CHEBI:15589"/>
        <dbReference type="ChEBI" id="CHEBI:30031"/>
    </reaction>
</comment>
<comment type="catalytic activity">
    <reaction evidence="4">
        <text>(S)-malate(in) + sulfate(out) = (S)-malate(out) + sulfate(in)</text>
        <dbReference type="Rhea" id="RHEA:71615"/>
        <dbReference type="ChEBI" id="CHEBI:15589"/>
        <dbReference type="ChEBI" id="CHEBI:16189"/>
    </reaction>
</comment>
<comment type="catalytic activity">
    <reaction evidence="4">
        <text>2 thiosulfate(out) + (S)-malate(in) = 2 thiosulfate(in) + (S)-malate(out)</text>
        <dbReference type="Rhea" id="RHEA:71619"/>
        <dbReference type="ChEBI" id="CHEBI:15589"/>
        <dbReference type="ChEBI" id="CHEBI:33542"/>
    </reaction>
</comment>
<comment type="catalytic activity">
    <reaction evidence="4">
        <text>malonate(out) + phosphate(in) = malonate(in) + phosphate(out)</text>
        <dbReference type="Rhea" id="RHEA:71623"/>
        <dbReference type="ChEBI" id="CHEBI:15792"/>
        <dbReference type="ChEBI" id="CHEBI:43474"/>
    </reaction>
</comment>
<comment type="catalytic activity">
    <reaction evidence="4">
        <text>succinate(out) + phosphate(in) = succinate(in) + phosphate(out)</text>
        <dbReference type="Rhea" id="RHEA:71627"/>
        <dbReference type="ChEBI" id="CHEBI:30031"/>
        <dbReference type="ChEBI" id="CHEBI:43474"/>
    </reaction>
</comment>
<comment type="catalytic activity">
    <reaction evidence="4">
        <text>sulfate(out) + phosphate(in) = sulfate(in) + phosphate(out)</text>
        <dbReference type="Rhea" id="RHEA:71631"/>
        <dbReference type="ChEBI" id="CHEBI:16189"/>
        <dbReference type="ChEBI" id="CHEBI:43474"/>
    </reaction>
</comment>
<comment type="catalytic activity">
    <reaction evidence="4">
        <text>2 thiosulfate(out) + phosphate(in) = 2 thiosulfate(in) + phosphate(out)</text>
        <dbReference type="Rhea" id="RHEA:71635"/>
        <dbReference type="ChEBI" id="CHEBI:33542"/>
        <dbReference type="ChEBI" id="CHEBI:43474"/>
    </reaction>
</comment>
<comment type="catalytic activity">
    <reaction evidence="1">
        <text>malonate(out) + succinate(in) = malonate(in) + succinate(out)</text>
        <dbReference type="Rhea" id="RHEA:71667"/>
        <dbReference type="ChEBI" id="CHEBI:15792"/>
        <dbReference type="ChEBI" id="CHEBI:30031"/>
    </reaction>
</comment>
<comment type="subcellular location">
    <subcellularLocation>
        <location evidence="1">Mitochondrion inner membrane</location>
        <topology evidence="2">Multi-pass membrane protein</topology>
    </subcellularLocation>
</comment>
<comment type="similarity">
    <text evidence="5">Belongs to the mitochondrial carrier (TC 2.A.29) family.</text>
</comment>
<feature type="chain" id="PRO_0000456254" description="Mitochondrial dicarboxylate carrier">
    <location>
        <begin position="1"/>
        <end position="290"/>
    </location>
</feature>
<feature type="transmembrane region" description="Helical; Name=1" evidence="2">
    <location>
        <begin position="12"/>
        <end position="32"/>
    </location>
</feature>
<feature type="transmembrane region" description="Helical; Name=2" evidence="2">
    <location>
        <begin position="65"/>
        <end position="84"/>
    </location>
</feature>
<feature type="transmembrane region" description="Helical; Name=3" evidence="2">
    <location>
        <begin position="103"/>
        <end position="123"/>
    </location>
</feature>
<feature type="transmembrane region" description="Helical; Name=4" evidence="2">
    <location>
        <begin position="163"/>
        <end position="182"/>
    </location>
</feature>
<feature type="transmembrane region" description="Helical; Name=5" evidence="2">
    <location>
        <begin position="203"/>
        <end position="223"/>
    </location>
</feature>
<feature type="transmembrane region" description="Helical; Name=6" evidence="2">
    <location>
        <begin position="256"/>
        <end position="276"/>
    </location>
</feature>
<feature type="repeat" description="Solcar 1" evidence="3">
    <location>
        <begin position="6"/>
        <end position="90"/>
    </location>
</feature>
<feature type="repeat" description="Solcar 2" evidence="3">
    <location>
        <begin position="101"/>
        <end position="188"/>
    </location>
</feature>
<feature type="repeat" description="Solcar 3" evidence="3">
    <location>
        <begin position="197"/>
        <end position="281"/>
    </location>
</feature>
<feature type="modified residue" description="N6-acetyllysine" evidence="1">
    <location>
        <position position="159"/>
    </location>
</feature>
<organism>
    <name type="scientific">Caenorhabditis elegans</name>
    <dbReference type="NCBI Taxonomy" id="6239"/>
    <lineage>
        <taxon>Eukaryota</taxon>
        <taxon>Metazoa</taxon>
        <taxon>Ecdysozoa</taxon>
        <taxon>Nematoda</taxon>
        <taxon>Chromadorea</taxon>
        <taxon>Rhabditida</taxon>
        <taxon>Rhabditina</taxon>
        <taxon>Rhabditomorpha</taxon>
        <taxon>Rhabditoidea</taxon>
        <taxon>Rhabditidae</taxon>
        <taxon>Peloderinae</taxon>
        <taxon>Caenorhabditis</taxon>
    </lineage>
</organism>
<name>DIC_CAEEL</name>
<protein>
    <recommendedName>
        <fullName>Mitochondrial dicarboxylate carrier</fullName>
        <shortName>DIC</shortName>
    </recommendedName>
    <alternativeName>
        <fullName>Solute carrier family 25 member 10 homolog</fullName>
    </alternativeName>
</protein>
<accession>G5EE96</accession>